<protein>
    <recommendedName>
        <fullName evidence="1">Dual-specificity RNA methyltransferase RlmN</fullName>
        <ecNumber evidence="1">2.1.1.192</ecNumber>
    </recommendedName>
    <alternativeName>
        <fullName evidence="1">23S rRNA (adenine(2503)-C(2))-methyltransferase</fullName>
    </alternativeName>
    <alternativeName>
        <fullName evidence="1">23S rRNA m2A2503 methyltransferase</fullName>
    </alternativeName>
    <alternativeName>
        <fullName evidence="1">Ribosomal RNA large subunit methyltransferase N</fullName>
    </alternativeName>
    <alternativeName>
        <fullName evidence="1">tRNA (adenine(37)-C(2))-methyltransferase</fullName>
    </alternativeName>
    <alternativeName>
        <fullName evidence="1">tRNA m2A37 methyltransferase</fullName>
    </alternativeName>
</protein>
<accession>A8GHW8</accession>
<gene>
    <name evidence="1" type="primary">rlmN</name>
    <name type="ordered locus">Spro_3612</name>
</gene>
<evidence type="ECO:0000255" key="1">
    <source>
        <dbReference type="HAMAP-Rule" id="MF_01849"/>
    </source>
</evidence>
<evidence type="ECO:0000255" key="2">
    <source>
        <dbReference type="PROSITE-ProRule" id="PRU01266"/>
    </source>
</evidence>
<feature type="chain" id="PRO_0000350391" description="Dual-specificity RNA methyltransferase RlmN">
    <location>
        <begin position="1"/>
        <end position="398"/>
    </location>
</feature>
<feature type="domain" description="Radical SAM core" evidence="2">
    <location>
        <begin position="125"/>
        <end position="364"/>
    </location>
</feature>
<feature type="active site" description="Proton acceptor" evidence="1">
    <location>
        <position position="119"/>
    </location>
</feature>
<feature type="active site" description="S-methylcysteine intermediate" evidence="1">
    <location>
        <position position="369"/>
    </location>
</feature>
<feature type="binding site" evidence="1">
    <location>
        <position position="139"/>
    </location>
    <ligand>
        <name>[4Fe-4S] cluster</name>
        <dbReference type="ChEBI" id="CHEBI:49883"/>
        <note>4Fe-4S-S-AdoMet</note>
    </ligand>
</feature>
<feature type="binding site" evidence="1">
    <location>
        <position position="143"/>
    </location>
    <ligand>
        <name>[4Fe-4S] cluster</name>
        <dbReference type="ChEBI" id="CHEBI:49883"/>
        <note>4Fe-4S-S-AdoMet</note>
    </ligand>
</feature>
<feature type="binding site" evidence="1">
    <location>
        <position position="146"/>
    </location>
    <ligand>
        <name>[4Fe-4S] cluster</name>
        <dbReference type="ChEBI" id="CHEBI:49883"/>
        <note>4Fe-4S-S-AdoMet</note>
    </ligand>
</feature>
<feature type="binding site" evidence="1">
    <location>
        <begin position="193"/>
        <end position="194"/>
    </location>
    <ligand>
        <name>S-adenosyl-L-methionine</name>
        <dbReference type="ChEBI" id="CHEBI:59789"/>
    </ligand>
</feature>
<feature type="binding site" evidence="1">
    <location>
        <position position="225"/>
    </location>
    <ligand>
        <name>S-adenosyl-L-methionine</name>
        <dbReference type="ChEBI" id="CHEBI:59789"/>
    </ligand>
</feature>
<feature type="binding site" evidence="1">
    <location>
        <begin position="247"/>
        <end position="249"/>
    </location>
    <ligand>
        <name>S-adenosyl-L-methionine</name>
        <dbReference type="ChEBI" id="CHEBI:59789"/>
    </ligand>
</feature>
<feature type="binding site" evidence="1">
    <location>
        <position position="326"/>
    </location>
    <ligand>
        <name>S-adenosyl-L-methionine</name>
        <dbReference type="ChEBI" id="CHEBI:59789"/>
    </ligand>
</feature>
<feature type="disulfide bond" description="(transient)" evidence="1">
    <location>
        <begin position="132"/>
        <end position="369"/>
    </location>
</feature>
<reference key="1">
    <citation type="submission" date="2007-09" db="EMBL/GenBank/DDBJ databases">
        <title>Complete sequence of chromosome of Serratia proteamaculans 568.</title>
        <authorList>
            <consortium name="US DOE Joint Genome Institute"/>
            <person name="Copeland A."/>
            <person name="Lucas S."/>
            <person name="Lapidus A."/>
            <person name="Barry K."/>
            <person name="Glavina del Rio T."/>
            <person name="Dalin E."/>
            <person name="Tice H."/>
            <person name="Pitluck S."/>
            <person name="Chain P."/>
            <person name="Malfatti S."/>
            <person name="Shin M."/>
            <person name="Vergez L."/>
            <person name="Schmutz J."/>
            <person name="Larimer F."/>
            <person name="Land M."/>
            <person name="Hauser L."/>
            <person name="Kyrpides N."/>
            <person name="Kim E."/>
            <person name="Taghavi S."/>
            <person name="Newman L."/>
            <person name="Vangronsveld J."/>
            <person name="van der Lelie D."/>
            <person name="Richardson P."/>
        </authorList>
    </citation>
    <scope>NUCLEOTIDE SEQUENCE [LARGE SCALE GENOMIC DNA]</scope>
    <source>
        <strain>568</strain>
    </source>
</reference>
<keyword id="KW-0004">4Fe-4S</keyword>
<keyword id="KW-0963">Cytoplasm</keyword>
<keyword id="KW-1015">Disulfide bond</keyword>
<keyword id="KW-0408">Iron</keyword>
<keyword id="KW-0411">Iron-sulfur</keyword>
<keyword id="KW-0479">Metal-binding</keyword>
<keyword id="KW-0489">Methyltransferase</keyword>
<keyword id="KW-0698">rRNA processing</keyword>
<keyword id="KW-0949">S-adenosyl-L-methionine</keyword>
<keyword id="KW-0808">Transferase</keyword>
<keyword id="KW-0819">tRNA processing</keyword>
<sequence length="398" mass="44378">MLEPITSEHIVSENNSLTTQSVNAEQPAVAKINLLDLNRQQLREFFAKMGEKPFRADQVMKWMYHYCCDDFEQMTDINKVLRNKLQSVAEIRAPEVAEEQRSADGTIKWAIKVGDQQVETVYIPDGDRATLCVSSQVGCALECKFCSTAQQGFNRNLRVSEIIGQVWRAAKIIGALKVTGERPITNVVMMGMGEPLLNLNNVVPAMEIMLDDFGFGLSKRRVTLSTSGVVPALDKLGDMIDVALAISLHAPNDKIRDDIVPINRKYNIETFLAAVRRYLAKSNANQGRVTVEYVMLDHINDSTDDAHQLAEVLKDTPCKINLIPWNPFPGAPYGRSSNSRVDRFSKVLMEYGFTTIVRKTRGDDIDAACGQLAGEVIDRTKRTLKKKMAGEPISVRAV</sequence>
<organism>
    <name type="scientific">Serratia proteamaculans (strain 568)</name>
    <dbReference type="NCBI Taxonomy" id="399741"/>
    <lineage>
        <taxon>Bacteria</taxon>
        <taxon>Pseudomonadati</taxon>
        <taxon>Pseudomonadota</taxon>
        <taxon>Gammaproteobacteria</taxon>
        <taxon>Enterobacterales</taxon>
        <taxon>Yersiniaceae</taxon>
        <taxon>Serratia</taxon>
    </lineage>
</organism>
<proteinExistence type="inferred from homology"/>
<dbReference type="EC" id="2.1.1.192" evidence="1"/>
<dbReference type="EMBL" id="CP000826">
    <property type="protein sequence ID" value="ABV42708.1"/>
    <property type="molecule type" value="Genomic_DNA"/>
</dbReference>
<dbReference type="SMR" id="A8GHW8"/>
<dbReference type="STRING" id="399741.Spro_3612"/>
<dbReference type="KEGG" id="spe:Spro_3612"/>
<dbReference type="eggNOG" id="COG0820">
    <property type="taxonomic scope" value="Bacteria"/>
</dbReference>
<dbReference type="HOGENOM" id="CLU_029101_0_0_6"/>
<dbReference type="OrthoDB" id="9793973at2"/>
<dbReference type="GO" id="GO:0005737">
    <property type="term" value="C:cytoplasm"/>
    <property type="evidence" value="ECO:0007669"/>
    <property type="project" value="UniProtKB-SubCell"/>
</dbReference>
<dbReference type="GO" id="GO:0051539">
    <property type="term" value="F:4 iron, 4 sulfur cluster binding"/>
    <property type="evidence" value="ECO:0007669"/>
    <property type="project" value="UniProtKB-UniRule"/>
</dbReference>
<dbReference type="GO" id="GO:0046872">
    <property type="term" value="F:metal ion binding"/>
    <property type="evidence" value="ECO:0007669"/>
    <property type="project" value="UniProtKB-KW"/>
</dbReference>
<dbReference type="GO" id="GO:0070040">
    <property type="term" value="F:rRNA (adenine(2503)-C2-)-methyltransferase activity"/>
    <property type="evidence" value="ECO:0007669"/>
    <property type="project" value="UniProtKB-UniRule"/>
</dbReference>
<dbReference type="GO" id="GO:0019843">
    <property type="term" value="F:rRNA binding"/>
    <property type="evidence" value="ECO:0007669"/>
    <property type="project" value="UniProtKB-UniRule"/>
</dbReference>
<dbReference type="GO" id="GO:0002935">
    <property type="term" value="F:tRNA (adenine(37)-C2)-methyltransferase activity"/>
    <property type="evidence" value="ECO:0007669"/>
    <property type="project" value="UniProtKB-UniRule"/>
</dbReference>
<dbReference type="GO" id="GO:0000049">
    <property type="term" value="F:tRNA binding"/>
    <property type="evidence" value="ECO:0007669"/>
    <property type="project" value="UniProtKB-UniRule"/>
</dbReference>
<dbReference type="GO" id="GO:0070475">
    <property type="term" value="P:rRNA base methylation"/>
    <property type="evidence" value="ECO:0007669"/>
    <property type="project" value="UniProtKB-UniRule"/>
</dbReference>
<dbReference type="GO" id="GO:0030488">
    <property type="term" value="P:tRNA methylation"/>
    <property type="evidence" value="ECO:0007669"/>
    <property type="project" value="UniProtKB-UniRule"/>
</dbReference>
<dbReference type="CDD" id="cd01335">
    <property type="entry name" value="Radical_SAM"/>
    <property type="match status" value="1"/>
</dbReference>
<dbReference type="FunFam" id="1.10.150.530:FF:000001">
    <property type="entry name" value="Dual-specificity RNA methyltransferase RlmN"/>
    <property type="match status" value="1"/>
</dbReference>
<dbReference type="FunFam" id="3.20.20.70:FF:000008">
    <property type="entry name" value="Dual-specificity RNA methyltransferase RlmN"/>
    <property type="match status" value="1"/>
</dbReference>
<dbReference type="Gene3D" id="1.10.150.530">
    <property type="match status" value="1"/>
</dbReference>
<dbReference type="Gene3D" id="3.20.20.70">
    <property type="entry name" value="Aldolase class I"/>
    <property type="match status" value="1"/>
</dbReference>
<dbReference type="HAMAP" id="MF_01849">
    <property type="entry name" value="RNA_methyltr_RlmN"/>
    <property type="match status" value="1"/>
</dbReference>
<dbReference type="InterPro" id="IPR013785">
    <property type="entry name" value="Aldolase_TIM"/>
</dbReference>
<dbReference type="InterPro" id="IPR040072">
    <property type="entry name" value="Methyltransferase_A"/>
</dbReference>
<dbReference type="InterPro" id="IPR048641">
    <property type="entry name" value="RlmN_N"/>
</dbReference>
<dbReference type="InterPro" id="IPR027492">
    <property type="entry name" value="RNA_MTrfase_RlmN"/>
</dbReference>
<dbReference type="InterPro" id="IPR004383">
    <property type="entry name" value="rRNA_lsu_MTrfase_RlmN/Cfr"/>
</dbReference>
<dbReference type="InterPro" id="IPR007197">
    <property type="entry name" value="rSAM"/>
</dbReference>
<dbReference type="NCBIfam" id="NF008396">
    <property type="entry name" value="PRK11194.1"/>
    <property type="match status" value="1"/>
</dbReference>
<dbReference type="NCBIfam" id="TIGR00048">
    <property type="entry name" value="rRNA_mod_RlmN"/>
    <property type="match status" value="1"/>
</dbReference>
<dbReference type="PANTHER" id="PTHR30544">
    <property type="entry name" value="23S RRNA METHYLTRANSFERASE"/>
    <property type="match status" value="1"/>
</dbReference>
<dbReference type="PANTHER" id="PTHR30544:SF5">
    <property type="entry name" value="RADICAL SAM CORE DOMAIN-CONTAINING PROTEIN"/>
    <property type="match status" value="1"/>
</dbReference>
<dbReference type="Pfam" id="PF04055">
    <property type="entry name" value="Radical_SAM"/>
    <property type="match status" value="1"/>
</dbReference>
<dbReference type="Pfam" id="PF21016">
    <property type="entry name" value="RlmN_N"/>
    <property type="match status" value="1"/>
</dbReference>
<dbReference type="PIRSF" id="PIRSF006004">
    <property type="entry name" value="CHP00048"/>
    <property type="match status" value="1"/>
</dbReference>
<dbReference type="SFLD" id="SFLDF00275">
    <property type="entry name" value="adenosine_C2_methyltransferase"/>
    <property type="match status" value="1"/>
</dbReference>
<dbReference type="SFLD" id="SFLDG01062">
    <property type="entry name" value="methyltransferase_(Class_A)"/>
    <property type="match status" value="1"/>
</dbReference>
<dbReference type="SUPFAM" id="SSF102114">
    <property type="entry name" value="Radical SAM enzymes"/>
    <property type="match status" value="1"/>
</dbReference>
<dbReference type="PROSITE" id="PS51918">
    <property type="entry name" value="RADICAL_SAM"/>
    <property type="match status" value="1"/>
</dbReference>
<name>RLMN_SERP5</name>
<comment type="function">
    <text evidence="1">Specifically methylates position 2 of adenine 2503 in 23S rRNA and position 2 of adenine 37 in tRNAs. m2A2503 modification seems to play a crucial role in the proofreading step occurring at the peptidyl transferase center and thus would serve to optimize ribosomal fidelity.</text>
</comment>
<comment type="catalytic activity">
    <reaction evidence="1">
        <text>adenosine(2503) in 23S rRNA + 2 reduced [2Fe-2S]-[ferredoxin] + 2 S-adenosyl-L-methionine = 2-methyladenosine(2503) in 23S rRNA + 5'-deoxyadenosine + L-methionine + 2 oxidized [2Fe-2S]-[ferredoxin] + S-adenosyl-L-homocysteine</text>
        <dbReference type="Rhea" id="RHEA:42916"/>
        <dbReference type="Rhea" id="RHEA-COMP:10000"/>
        <dbReference type="Rhea" id="RHEA-COMP:10001"/>
        <dbReference type="Rhea" id="RHEA-COMP:10152"/>
        <dbReference type="Rhea" id="RHEA-COMP:10282"/>
        <dbReference type="ChEBI" id="CHEBI:17319"/>
        <dbReference type="ChEBI" id="CHEBI:33737"/>
        <dbReference type="ChEBI" id="CHEBI:33738"/>
        <dbReference type="ChEBI" id="CHEBI:57844"/>
        <dbReference type="ChEBI" id="CHEBI:57856"/>
        <dbReference type="ChEBI" id="CHEBI:59789"/>
        <dbReference type="ChEBI" id="CHEBI:74411"/>
        <dbReference type="ChEBI" id="CHEBI:74497"/>
        <dbReference type="EC" id="2.1.1.192"/>
    </reaction>
</comment>
<comment type="catalytic activity">
    <reaction evidence="1">
        <text>adenosine(37) in tRNA + 2 reduced [2Fe-2S]-[ferredoxin] + 2 S-adenosyl-L-methionine = 2-methyladenosine(37) in tRNA + 5'-deoxyadenosine + L-methionine + 2 oxidized [2Fe-2S]-[ferredoxin] + S-adenosyl-L-homocysteine</text>
        <dbReference type="Rhea" id="RHEA:43332"/>
        <dbReference type="Rhea" id="RHEA-COMP:10000"/>
        <dbReference type="Rhea" id="RHEA-COMP:10001"/>
        <dbReference type="Rhea" id="RHEA-COMP:10162"/>
        <dbReference type="Rhea" id="RHEA-COMP:10485"/>
        <dbReference type="ChEBI" id="CHEBI:17319"/>
        <dbReference type="ChEBI" id="CHEBI:33737"/>
        <dbReference type="ChEBI" id="CHEBI:33738"/>
        <dbReference type="ChEBI" id="CHEBI:57844"/>
        <dbReference type="ChEBI" id="CHEBI:57856"/>
        <dbReference type="ChEBI" id="CHEBI:59789"/>
        <dbReference type="ChEBI" id="CHEBI:74411"/>
        <dbReference type="ChEBI" id="CHEBI:74497"/>
        <dbReference type="EC" id="2.1.1.192"/>
    </reaction>
</comment>
<comment type="cofactor">
    <cofactor evidence="1">
        <name>[4Fe-4S] cluster</name>
        <dbReference type="ChEBI" id="CHEBI:49883"/>
    </cofactor>
    <text evidence="1">Binds 1 [4Fe-4S] cluster. The cluster is coordinated with 3 cysteines and an exchangeable S-adenosyl-L-methionine.</text>
</comment>
<comment type="subcellular location">
    <subcellularLocation>
        <location evidence="1">Cytoplasm</location>
    </subcellularLocation>
</comment>
<comment type="miscellaneous">
    <text evidence="1">Reaction proceeds by a ping-pong mechanism involving intermediate methylation of a conserved cysteine residue.</text>
</comment>
<comment type="similarity">
    <text evidence="1">Belongs to the radical SAM superfamily. RlmN family.</text>
</comment>